<feature type="chain" id="PRO_0000429771" description="DNA topoisomerase 3-alpha">
    <location>
        <begin position="1"/>
        <end position="926"/>
    </location>
</feature>
<feature type="domain" description="Toprim" evidence="4">
    <location>
        <begin position="10"/>
        <end position="154"/>
    </location>
</feature>
<feature type="domain" description="Topo IA-type catalytic" evidence="6">
    <location>
        <begin position="172"/>
        <end position="604"/>
    </location>
</feature>
<feature type="zinc finger region" description="C4-type" evidence="2">
    <location>
        <begin position="642"/>
        <end position="670"/>
    </location>
</feature>
<feature type="zinc finger region" description="CCHC-type 1" evidence="3">
    <location>
        <begin position="767"/>
        <end position="782"/>
    </location>
</feature>
<feature type="zinc finger region" description="GRF-type" evidence="5">
    <location>
        <begin position="806"/>
        <end position="845"/>
    </location>
</feature>
<feature type="zinc finger region" description="CCHC-type 2" evidence="3">
    <location>
        <begin position="901"/>
        <end position="917"/>
    </location>
</feature>
<feature type="region of interest" description="Interaction with DNA" evidence="1">
    <location>
        <begin position="219"/>
        <end position="224"/>
    </location>
</feature>
<feature type="region of interest" description="Disordered" evidence="8">
    <location>
        <begin position="740"/>
        <end position="760"/>
    </location>
</feature>
<feature type="region of interest" description="Disordered" evidence="8">
    <location>
        <begin position="775"/>
        <end position="806"/>
    </location>
</feature>
<feature type="region of interest" description="Disordered" evidence="8">
    <location>
        <begin position="849"/>
        <end position="890"/>
    </location>
</feature>
<feature type="compositionally biased region" description="Polar residues" evidence="8">
    <location>
        <begin position="750"/>
        <end position="760"/>
    </location>
</feature>
<feature type="compositionally biased region" description="Gly residues" evidence="8">
    <location>
        <begin position="873"/>
        <end position="884"/>
    </location>
</feature>
<feature type="active site" description="O-(5'-phospho-DNA)-tyrosine intermediate" evidence="6">
    <location>
        <position position="342"/>
    </location>
</feature>
<feature type="binding site" evidence="4">
    <location>
        <position position="16"/>
    </location>
    <ligand>
        <name>Mg(2+)</name>
        <dbReference type="ChEBI" id="CHEBI:18420"/>
        <label>1</label>
        <note>catalytic</note>
    </ligand>
</feature>
<feature type="binding site" evidence="4">
    <location>
        <position position="123"/>
    </location>
    <ligand>
        <name>Mg(2+)</name>
        <dbReference type="ChEBI" id="CHEBI:18420"/>
        <label>1</label>
        <note>catalytic</note>
    </ligand>
</feature>
<feature type="binding site" evidence="4">
    <location>
        <position position="123"/>
    </location>
    <ligand>
        <name>Mg(2+)</name>
        <dbReference type="ChEBI" id="CHEBI:18420"/>
        <label>2</label>
    </ligand>
</feature>
<feature type="binding site" evidence="4">
    <location>
        <position position="125"/>
    </location>
    <ligand>
        <name>Mg(2+)</name>
        <dbReference type="ChEBI" id="CHEBI:18420"/>
        <label>2</label>
    </ligand>
</feature>
<feature type="binding site" evidence="5">
    <location>
        <position position="806"/>
    </location>
    <ligand>
        <name>Zn(2+)</name>
        <dbReference type="ChEBI" id="CHEBI:29105"/>
    </ligand>
</feature>
<feature type="binding site" evidence="5">
    <location>
        <position position="809"/>
    </location>
    <ligand>
        <name>Zn(2+)</name>
        <dbReference type="ChEBI" id="CHEBI:29105"/>
    </ligand>
</feature>
<feature type="binding site" evidence="5">
    <location>
        <position position="831"/>
    </location>
    <ligand>
        <name>Zn(2+)</name>
        <dbReference type="ChEBI" id="CHEBI:29105"/>
    </ligand>
</feature>
<feature type="binding site" evidence="5">
    <location>
        <position position="836"/>
    </location>
    <ligand>
        <name>Zn(2+)</name>
        <dbReference type="ChEBI" id="CHEBI:29105"/>
    </ligand>
</feature>
<feature type="site" description="Interaction with DNA" evidence="4">
    <location>
        <position position="80"/>
    </location>
</feature>
<feature type="site" description="Interaction with DNA" evidence="4">
    <location>
        <position position="195"/>
    </location>
</feature>
<feature type="site" description="Interaction with DNA" evidence="4">
    <location>
        <position position="202"/>
    </location>
</feature>
<feature type="site" description="Interaction with DNA" evidence="4">
    <location>
        <position position="344"/>
    </location>
</feature>
<protein>
    <recommendedName>
        <fullName>DNA topoisomerase 3-alpha</fullName>
        <ecNumber evidence="7">5.6.2.1</ecNumber>
    </recommendedName>
</protein>
<accession>Q9LVP1</accession>
<comment type="function">
    <text evidence="9">Releases the supercoiling and torsional tension of DNA introduced during the DNA replication and transcription by transiently cleaving and rejoining one strand of the DNA duplex. Introduces a single-strand break via transesterification at a target site in duplex DNA. The scissile phosphodiester is attacked by the catalytic tyrosine of the enzyme, resulting in the formation of a DNA-(5'-phosphotyrosyl)-enzyme intermediate and the expulsion of a 3'-OH DNA strand. The free DNA strand then undergoes passage around the unbroken strand thus removing DNA supercoils. Finally, in the religation step, the DNA 3'-OH attacks the covalent intermediate to expel the active-site tyrosine and restore the DNA phosphodiester backbone. Essential component of the RMI complex, a complex that plays an important role in the resolution step of homologous recombination, in a process called Holliday Junction dissolution, to limit DNA crossover formation in cells. Together with RMI1, is essential for the resolution of meiotic recombination intermediates, a step that prevents entanglement of the parental chromosomes. May have DNA decatenation activity.</text>
</comment>
<comment type="catalytic activity">
    <reaction evidence="7">
        <text>ATP-independent breakage of single-stranded DNA, followed by passage and rejoining.</text>
        <dbReference type="EC" id="5.6.2.1"/>
    </reaction>
</comment>
<comment type="cofactor">
    <cofactor evidence="1">
        <name>Mg(2+)</name>
        <dbReference type="ChEBI" id="CHEBI:18420"/>
    </cofactor>
    <text evidence="1">Binds two Mg(2+) ions per subunit.</text>
</comment>
<comment type="subunit">
    <text evidence="1">Component of the RMI complex, containing at least TOP3A and RMI1. The RMI complex interacts with RECQL4A (By similarity).</text>
</comment>
<comment type="disruption phenotype">
    <text evidence="9">Severe developmental defects and early lethality.</text>
</comment>
<comment type="similarity">
    <text evidence="6 10">Belongs to the type IA topoisomerase family.</text>
</comment>
<gene>
    <name type="primary">TOP3A</name>
    <name type="ordered locus">At5g63920</name>
    <name type="ORF">MGI19.16</name>
</gene>
<proteinExistence type="evidence at protein level"/>
<sequence length="926" mass="103407">MSRRGGGPVTVLNVAEKPSVAKSVAGILSRGTFRTREGRSRYNKIFEFDYAINGQPCRMLMTSVIGHLMELEFADRYRKWHSCDPADLYQAPVMKHVPEDKKDIKKTLEEEARKSDWLVLWLDCDREGENIAFEVVDVCRAVKHNLFIRRAHFSALIDRDIHEAVQNLRDPNQLFAEAVDARQEIDLRIGASFTRFQTMLLRDRFAIDSTGEERSRVISYGPCQFPTLGFIVERYWEIQAHEPEEFWTINCSHQSEEGLATFNWMRGHLFDYASAVILYEMCVEEPTATVMNVPHPRERFKYPPYPLNTIELEKRASRYFRLSSEHTMKVAEELYQAGFISYPRTETDSFSSRTDLRAMVEEQTRHPAWGSYAQRLLEPEGGLWRNPANGGHDDKAHPPIHPTKFSSGESNWSRDHLNVYELVVRHYLACVSQPAVAAETTVEIDIAGERFSASGRAILAKNYLEVYRFESWGGSVIPVYEKGQQFIPTTLTLDAAVTRPPPLLCEADLLSCMDKAGIGTDATMHDHIKKLLDRGYATKDANTRFSPTNLGEALVMGYDDMGYELWKPNLRALMEHDMNEVSVGRKTKAEVLETCLQQMKACFLDARVKKSKLLEAMTIFFERSNNTDESESQTAGEVVRRCNLCNESDMALRKNRDGNFMVGCMNYPQCRNAVWLPGPTLEASVTTNVCQSCGPGPVYKILFKFRQIGIPPGFDVNHLGCVGGCDDILKQLIDICGTGSRSQARRTPGTAPSNNIQGSNTRQSNVCIHCQQRGHASTNCPSRVPASRNSRPTATNPRNDESTVSCNTCGSQCVLRTANTEANRGRQFFSCPTQGCSFFAWEDSINNSSGNATTGSNSGGSGRRGSRGRGRGGRGGQSSGGRRGSGTSFVSATGEPVSGIRCFSCGDPSHFANACPNRNNSNGNYF</sequence>
<organism>
    <name type="scientific">Arabidopsis thaliana</name>
    <name type="common">Mouse-ear cress</name>
    <dbReference type="NCBI Taxonomy" id="3702"/>
    <lineage>
        <taxon>Eukaryota</taxon>
        <taxon>Viridiplantae</taxon>
        <taxon>Streptophyta</taxon>
        <taxon>Embryophyta</taxon>
        <taxon>Tracheophyta</taxon>
        <taxon>Spermatophyta</taxon>
        <taxon>Magnoliopsida</taxon>
        <taxon>eudicotyledons</taxon>
        <taxon>Gunneridae</taxon>
        <taxon>Pentapetalae</taxon>
        <taxon>rosids</taxon>
        <taxon>malvids</taxon>
        <taxon>Brassicales</taxon>
        <taxon>Brassicaceae</taxon>
        <taxon>Camelineae</taxon>
        <taxon>Arabidopsis</taxon>
    </lineage>
</organism>
<reference key="1">
    <citation type="journal article" date="2008" name="PLoS Genet.">
        <title>Topoisomerase 3alpha and RMI1 suppress somatic crossovers and are essential for resolution of meiotic recombination intermediates in Arabidopsis thaliana.</title>
        <authorList>
            <person name="Hartung F."/>
            <person name="Suer S."/>
            <person name="Knoll A."/>
            <person name="Wurz-Wildersinn R."/>
            <person name="Puchta H."/>
        </authorList>
    </citation>
    <scope>NUCLEOTIDE SEQUENCE [MRNA]</scope>
    <scope>FUNCTION</scope>
    <scope>INTERACTION WITH RIM1</scope>
    <scope>DISRUPTION PHENOTYPE</scope>
    <source>
        <strain>cv. Columbia</strain>
    </source>
</reference>
<reference key="2">
    <citation type="journal article" date="2000" name="DNA Res.">
        <title>Structural analysis of Arabidopsis thaliana chromosome 5. X. Sequence features of the regions of 3,076,755 bp covered by sixty P1 and TAC clones.</title>
        <authorList>
            <person name="Sato S."/>
            <person name="Nakamura Y."/>
            <person name="Kaneko T."/>
            <person name="Katoh T."/>
            <person name="Asamizu E."/>
            <person name="Kotani H."/>
            <person name="Tabata S."/>
        </authorList>
    </citation>
    <scope>NUCLEOTIDE SEQUENCE [LARGE SCALE GENOMIC DNA]</scope>
    <source>
        <strain>cv. Columbia</strain>
    </source>
</reference>
<reference key="3">
    <citation type="journal article" date="2017" name="Plant J.">
        <title>Araport11: a complete reannotation of the Arabidopsis thaliana reference genome.</title>
        <authorList>
            <person name="Cheng C.Y."/>
            <person name="Krishnakumar V."/>
            <person name="Chan A.P."/>
            <person name="Thibaud-Nissen F."/>
            <person name="Schobel S."/>
            <person name="Town C.D."/>
        </authorList>
    </citation>
    <scope>GENOME REANNOTATION</scope>
    <source>
        <strain>cv. Columbia</strain>
    </source>
</reference>
<name>TOP3A_ARATH</name>
<evidence type="ECO:0000250" key="1"/>
<evidence type="ECO:0000255" key="2"/>
<evidence type="ECO:0000255" key="3">
    <source>
        <dbReference type="PROSITE-ProRule" id="PRU00047"/>
    </source>
</evidence>
<evidence type="ECO:0000255" key="4">
    <source>
        <dbReference type="PROSITE-ProRule" id="PRU00995"/>
    </source>
</evidence>
<evidence type="ECO:0000255" key="5">
    <source>
        <dbReference type="PROSITE-ProRule" id="PRU01343"/>
    </source>
</evidence>
<evidence type="ECO:0000255" key="6">
    <source>
        <dbReference type="PROSITE-ProRule" id="PRU01383"/>
    </source>
</evidence>
<evidence type="ECO:0000255" key="7">
    <source>
        <dbReference type="PROSITE-ProRule" id="PRU10131"/>
    </source>
</evidence>
<evidence type="ECO:0000256" key="8">
    <source>
        <dbReference type="SAM" id="MobiDB-lite"/>
    </source>
</evidence>
<evidence type="ECO:0000269" key="9">
    <source>
    </source>
</evidence>
<evidence type="ECO:0000305" key="10"/>
<keyword id="KW-0238">DNA-binding</keyword>
<keyword id="KW-0413">Isomerase</keyword>
<keyword id="KW-0460">Magnesium</keyword>
<keyword id="KW-0469">Meiosis</keyword>
<keyword id="KW-0479">Metal-binding</keyword>
<keyword id="KW-1185">Reference proteome</keyword>
<keyword id="KW-0677">Repeat</keyword>
<keyword id="KW-0799">Topoisomerase</keyword>
<keyword id="KW-0862">Zinc</keyword>
<keyword id="KW-0863">Zinc-finger</keyword>
<dbReference type="EC" id="5.6.2.1" evidence="7"/>
<dbReference type="EMBL" id="EU295446">
    <property type="protein sequence ID" value="ACA50279.1"/>
    <property type="molecule type" value="mRNA"/>
</dbReference>
<dbReference type="EMBL" id="AB019227">
    <property type="protein sequence ID" value="BAA96895.1"/>
    <property type="molecule type" value="Genomic_DNA"/>
</dbReference>
<dbReference type="EMBL" id="CP002688">
    <property type="protein sequence ID" value="AED97816.1"/>
    <property type="molecule type" value="Genomic_DNA"/>
</dbReference>
<dbReference type="RefSeq" id="NP_201197.1">
    <property type="nucleotide sequence ID" value="NM_125788.7"/>
</dbReference>
<dbReference type="SMR" id="Q9LVP1"/>
<dbReference type="FunCoup" id="Q9LVP1">
    <property type="interactions" value="4006"/>
</dbReference>
<dbReference type="STRING" id="3702.Q9LVP1"/>
<dbReference type="iPTMnet" id="Q9LVP1"/>
<dbReference type="PaxDb" id="3702-AT5G63920.1"/>
<dbReference type="ProteomicsDB" id="234335"/>
<dbReference type="EnsemblPlants" id="AT5G63920.1">
    <property type="protein sequence ID" value="AT5G63920.1"/>
    <property type="gene ID" value="AT5G63920"/>
</dbReference>
<dbReference type="GeneID" id="836513"/>
<dbReference type="Gramene" id="AT5G63920.1">
    <property type="protein sequence ID" value="AT5G63920.1"/>
    <property type="gene ID" value="AT5G63920"/>
</dbReference>
<dbReference type="KEGG" id="ath:AT5G63920"/>
<dbReference type="Araport" id="AT5G63920"/>
<dbReference type="TAIR" id="AT5G63920">
    <property type="gene designation" value="TOP3A"/>
</dbReference>
<dbReference type="eggNOG" id="KOG1956">
    <property type="taxonomic scope" value="Eukaryota"/>
</dbReference>
<dbReference type="HOGENOM" id="CLU_002929_1_2_1"/>
<dbReference type="InParanoid" id="Q9LVP1"/>
<dbReference type="OMA" id="MELAMGD"/>
<dbReference type="PhylomeDB" id="Q9LVP1"/>
<dbReference type="PRO" id="PR:Q9LVP1"/>
<dbReference type="Proteomes" id="UP000006548">
    <property type="component" value="Chromosome 5"/>
</dbReference>
<dbReference type="ExpressionAtlas" id="Q9LVP1">
    <property type="expression patterns" value="baseline and differential"/>
</dbReference>
<dbReference type="GO" id="GO:0005694">
    <property type="term" value="C:chromosome"/>
    <property type="evidence" value="ECO:0007669"/>
    <property type="project" value="InterPro"/>
</dbReference>
<dbReference type="GO" id="GO:0003677">
    <property type="term" value="F:DNA binding"/>
    <property type="evidence" value="ECO:0007669"/>
    <property type="project" value="UniProtKB-KW"/>
</dbReference>
<dbReference type="GO" id="GO:0003917">
    <property type="term" value="F:DNA topoisomerase type I (single strand cut, ATP-independent) activity"/>
    <property type="evidence" value="ECO:0007669"/>
    <property type="project" value="UniProtKB-EC"/>
</dbReference>
<dbReference type="GO" id="GO:0008270">
    <property type="term" value="F:zinc ion binding"/>
    <property type="evidence" value="ECO:0007669"/>
    <property type="project" value="UniProtKB-KW"/>
</dbReference>
<dbReference type="GO" id="GO:0007059">
    <property type="term" value="P:chromosome segregation"/>
    <property type="evidence" value="ECO:0000315"/>
    <property type="project" value="TAIR"/>
</dbReference>
<dbReference type="GO" id="GO:0006281">
    <property type="term" value="P:DNA repair"/>
    <property type="evidence" value="ECO:0000315"/>
    <property type="project" value="TAIR"/>
</dbReference>
<dbReference type="GO" id="GO:0006265">
    <property type="term" value="P:DNA topological change"/>
    <property type="evidence" value="ECO:0007669"/>
    <property type="project" value="InterPro"/>
</dbReference>
<dbReference type="GO" id="GO:0051321">
    <property type="term" value="P:meiotic cell cycle"/>
    <property type="evidence" value="ECO:0000315"/>
    <property type="project" value="TAIR"/>
</dbReference>
<dbReference type="GO" id="GO:0000278">
    <property type="term" value="P:mitotic cell cycle"/>
    <property type="evidence" value="ECO:0000315"/>
    <property type="project" value="TAIR"/>
</dbReference>
<dbReference type="GO" id="GO:0000712">
    <property type="term" value="P:resolution of meiotic recombination intermediates"/>
    <property type="evidence" value="ECO:0000315"/>
    <property type="project" value="TAIR"/>
</dbReference>
<dbReference type="CDD" id="cd00186">
    <property type="entry name" value="TOP1Ac"/>
    <property type="match status" value="1"/>
</dbReference>
<dbReference type="CDD" id="cd03362">
    <property type="entry name" value="TOPRIM_TopoIA_TopoIII"/>
    <property type="match status" value="1"/>
</dbReference>
<dbReference type="FunFam" id="1.10.290.10:FF:000003">
    <property type="entry name" value="DNA topoisomerase"/>
    <property type="match status" value="1"/>
</dbReference>
<dbReference type="FunFam" id="2.70.20.10:FF:000004">
    <property type="entry name" value="DNA topoisomerase"/>
    <property type="match status" value="1"/>
</dbReference>
<dbReference type="FunFam" id="3.40.50.140:FF:000003">
    <property type="entry name" value="DNA topoisomerase"/>
    <property type="match status" value="1"/>
</dbReference>
<dbReference type="FunFam" id="3.30.65.10:FF:000008">
    <property type="entry name" value="DNA topoisomerase I"/>
    <property type="match status" value="1"/>
</dbReference>
<dbReference type="Gene3D" id="3.40.50.140">
    <property type="match status" value="1"/>
</dbReference>
<dbReference type="Gene3D" id="3.30.65.10">
    <property type="entry name" value="Bacterial Topoisomerase I, domain 1"/>
    <property type="match status" value="1"/>
</dbReference>
<dbReference type="Gene3D" id="1.10.460.10">
    <property type="entry name" value="Topoisomerase I, domain 2"/>
    <property type="match status" value="1"/>
</dbReference>
<dbReference type="Gene3D" id="2.70.20.10">
    <property type="entry name" value="Topoisomerase I, domain 3"/>
    <property type="match status" value="1"/>
</dbReference>
<dbReference type="Gene3D" id="1.10.290.10">
    <property type="entry name" value="Topoisomerase I, domain 4"/>
    <property type="match status" value="1"/>
</dbReference>
<dbReference type="InterPro" id="IPR000380">
    <property type="entry name" value="Topo_IA"/>
</dbReference>
<dbReference type="InterPro" id="IPR003601">
    <property type="entry name" value="Topo_IA_2"/>
</dbReference>
<dbReference type="InterPro" id="IPR023406">
    <property type="entry name" value="Topo_IA_AS"/>
</dbReference>
<dbReference type="InterPro" id="IPR013497">
    <property type="entry name" value="Topo_IA_cen"/>
</dbReference>
<dbReference type="InterPro" id="IPR013824">
    <property type="entry name" value="Topo_IA_cen_sub1"/>
</dbReference>
<dbReference type="InterPro" id="IPR013825">
    <property type="entry name" value="Topo_IA_cen_sub2"/>
</dbReference>
<dbReference type="InterPro" id="IPR013826">
    <property type="entry name" value="Topo_IA_cen_sub3"/>
</dbReference>
<dbReference type="InterPro" id="IPR023405">
    <property type="entry name" value="Topo_IA_core_domain"/>
</dbReference>
<dbReference type="InterPro" id="IPR003602">
    <property type="entry name" value="Topo_IA_DNA-bd_dom"/>
</dbReference>
<dbReference type="InterPro" id="IPR013498">
    <property type="entry name" value="Topo_IA_Znf"/>
</dbReference>
<dbReference type="InterPro" id="IPR006171">
    <property type="entry name" value="TOPRIM_dom"/>
</dbReference>
<dbReference type="InterPro" id="IPR034144">
    <property type="entry name" value="TOPRIM_TopoIII"/>
</dbReference>
<dbReference type="InterPro" id="IPR001878">
    <property type="entry name" value="Znf_CCHC"/>
</dbReference>
<dbReference type="InterPro" id="IPR036875">
    <property type="entry name" value="Znf_CCHC_sf"/>
</dbReference>
<dbReference type="InterPro" id="IPR010666">
    <property type="entry name" value="Znf_GRF"/>
</dbReference>
<dbReference type="PANTHER" id="PTHR11390:SF21">
    <property type="entry name" value="DNA TOPOISOMERASE 3-ALPHA"/>
    <property type="match status" value="1"/>
</dbReference>
<dbReference type="PANTHER" id="PTHR11390">
    <property type="entry name" value="PROKARYOTIC DNA TOPOISOMERASE"/>
    <property type="match status" value="1"/>
</dbReference>
<dbReference type="Pfam" id="PF01131">
    <property type="entry name" value="Topoisom_bac"/>
    <property type="match status" value="1"/>
</dbReference>
<dbReference type="Pfam" id="PF01751">
    <property type="entry name" value="Toprim"/>
    <property type="match status" value="1"/>
</dbReference>
<dbReference type="Pfam" id="PF06839">
    <property type="entry name" value="Zn_ribbon_GRF"/>
    <property type="match status" value="1"/>
</dbReference>
<dbReference type="Pfam" id="PF01396">
    <property type="entry name" value="Zn_ribbon_Top1"/>
    <property type="match status" value="1"/>
</dbReference>
<dbReference type="PRINTS" id="PR00417">
    <property type="entry name" value="PRTPISMRASEI"/>
</dbReference>
<dbReference type="SMART" id="SM00437">
    <property type="entry name" value="TOP1Ac"/>
    <property type="match status" value="1"/>
</dbReference>
<dbReference type="SMART" id="SM00436">
    <property type="entry name" value="TOP1Bc"/>
    <property type="match status" value="1"/>
</dbReference>
<dbReference type="SMART" id="SM00493">
    <property type="entry name" value="TOPRIM"/>
    <property type="match status" value="1"/>
</dbReference>
<dbReference type="SMART" id="SM00343">
    <property type="entry name" value="ZnF_C2HC"/>
    <property type="match status" value="2"/>
</dbReference>
<dbReference type="SUPFAM" id="SSF56712">
    <property type="entry name" value="Prokaryotic type I DNA topoisomerase"/>
    <property type="match status" value="1"/>
</dbReference>
<dbReference type="SUPFAM" id="SSF57756">
    <property type="entry name" value="Retrovirus zinc finger-like domains"/>
    <property type="match status" value="2"/>
</dbReference>
<dbReference type="PROSITE" id="PS00396">
    <property type="entry name" value="TOPO_IA_1"/>
    <property type="match status" value="1"/>
</dbReference>
<dbReference type="PROSITE" id="PS52039">
    <property type="entry name" value="TOPO_IA_2"/>
    <property type="match status" value="1"/>
</dbReference>
<dbReference type="PROSITE" id="PS50880">
    <property type="entry name" value="TOPRIM"/>
    <property type="match status" value="1"/>
</dbReference>
<dbReference type="PROSITE" id="PS50158">
    <property type="entry name" value="ZF_CCHC"/>
    <property type="match status" value="2"/>
</dbReference>
<dbReference type="PROSITE" id="PS51999">
    <property type="entry name" value="ZF_GRF"/>
    <property type="match status" value="1"/>
</dbReference>